<protein>
    <recommendedName>
        <fullName evidence="1">GTPase Der</fullName>
    </recommendedName>
    <alternativeName>
        <fullName evidence="1">GTP-binding protein EngA</fullName>
    </alternativeName>
</protein>
<comment type="function">
    <text evidence="1">GTPase that plays an essential role in the late steps of ribosome biogenesis.</text>
</comment>
<comment type="subunit">
    <text evidence="1">Associates with the 50S ribosomal subunit.</text>
</comment>
<comment type="similarity">
    <text evidence="1">Belongs to the TRAFAC class TrmE-Era-EngA-EngB-Septin-like GTPase superfamily. EngA (Der) GTPase family.</text>
</comment>
<gene>
    <name evidence="1" type="primary">der</name>
    <name type="synonym">engA</name>
    <name type="ordered locus">Bcep18194_A5109</name>
</gene>
<dbReference type="EMBL" id="CP000151">
    <property type="protein sequence ID" value="ABB08703.1"/>
    <property type="molecule type" value="Genomic_DNA"/>
</dbReference>
<dbReference type="RefSeq" id="WP_011352258.1">
    <property type="nucleotide sequence ID" value="NC_007510.1"/>
</dbReference>
<dbReference type="SMR" id="Q39FR3"/>
<dbReference type="GeneID" id="45094985"/>
<dbReference type="KEGG" id="bur:Bcep18194_A5109"/>
<dbReference type="PATRIC" id="fig|482957.22.peg.2046"/>
<dbReference type="HOGENOM" id="CLU_016077_6_2_4"/>
<dbReference type="Proteomes" id="UP000002705">
    <property type="component" value="Chromosome 1"/>
</dbReference>
<dbReference type="GO" id="GO:0016887">
    <property type="term" value="F:ATP hydrolysis activity"/>
    <property type="evidence" value="ECO:0007669"/>
    <property type="project" value="InterPro"/>
</dbReference>
<dbReference type="GO" id="GO:0005525">
    <property type="term" value="F:GTP binding"/>
    <property type="evidence" value="ECO:0007669"/>
    <property type="project" value="UniProtKB-UniRule"/>
</dbReference>
<dbReference type="GO" id="GO:0043022">
    <property type="term" value="F:ribosome binding"/>
    <property type="evidence" value="ECO:0007669"/>
    <property type="project" value="TreeGrafter"/>
</dbReference>
<dbReference type="GO" id="GO:0042254">
    <property type="term" value="P:ribosome biogenesis"/>
    <property type="evidence" value="ECO:0007669"/>
    <property type="project" value="UniProtKB-KW"/>
</dbReference>
<dbReference type="CDD" id="cd01894">
    <property type="entry name" value="EngA1"/>
    <property type="match status" value="1"/>
</dbReference>
<dbReference type="CDD" id="cd01895">
    <property type="entry name" value="EngA2"/>
    <property type="match status" value="1"/>
</dbReference>
<dbReference type="FunFam" id="3.30.300.20:FF:000004">
    <property type="entry name" value="GTPase Der"/>
    <property type="match status" value="1"/>
</dbReference>
<dbReference type="FunFam" id="3.40.50.300:FF:000040">
    <property type="entry name" value="GTPase Der"/>
    <property type="match status" value="1"/>
</dbReference>
<dbReference type="FunFam" id="3.40.50.300:FF:000057">
    <property type="entry name" value="GTPase Der"/>
    <property type="match status" value="1"/>
</dbReference>
<dbReference type="Gene3D" id="3.30.300.20">
    <property type="match status" value="1"/>
</dbReference>
<dbReference type="Gene3D" id="3.40.50.300">
    <property type="entry name" value="P-loop containing nucleotide triphosphate hydrolases"/>
    <property type="match status" value="2"/>
</dbReference>
<dbReference type="HAMAP" id="MF_00195">
    <property type="entry name" value="GTPase_Der"/>
    <property type="match status" value="1"/>
</dbReference>
<dbReference type="InterPro" id="IPR003593">
    <property type="entry name" value="AAA+_ATPase"/>
</dbReference>
<dbReference type="InterPro" id="IPR031166">
    <property type="entry name" value="G_ENGA"/>
</dbReference>
<dbReference type="InterPro" id="IPR006073">
    <property type="entry name" value="GTP-bd"/>
</dbReference>
<dbReference type="InterPro" id="IPR016484">
    <property type="entry name" value="GTPase_Der"/>
</dbReference>
<dbReference type="InterPro" id="IPR032859">
    <property type="entry name" value="KH_dom-like"/>
</dbReference>
<dbReference type="InterPro" id="IPR015946">
    <property type="entry name" value="KH_dom-like_a/b"/>
</dbReference>
<dbReference type="InterPro" id="IPR027417">
    <property type="entry name" value="P-loop_NTPase"/>
</dbReference>
<dbReference type="InterPro" id="IPR005225">
    <property type="entry name" value="Small_GTP-bd"/>
</dbReference>
<dbReference type="NCBIfam" id="TIGR03594">
    <property type="entry name" value="GTPase_EngA"/>
    <property type="match status" value="1"/>
</dbReference>
<dbReference type="NCBIfam" id="TIGR00231">
    <property type="entry name" value="small_GTP"/>
    <property type="match status" value="2"/>
</dbReference>
<dbReference type="PANTHER" id="PTHR43834">
    <property type="entry name" value="GTPASE DER"/>
    <property type="match status" value="1"/>
</dbReference>
<dbReference type="PANTHER" id="PTHR43834:SF6">
    <property type="entry name" value="GTPASE DER"/>
    <property type="match status" value="1"/>
</dbReference>
<dbReference type="Pfam" id="PF14714">
    <property type="entry name" value="KH_dom-like"/>
    <property type="match status" value="1"/>
</dbReference>
<dbReference type="Pfam" id="PF01926">
    <property type="entry name" value="MMR_HSR1"/>
    <property type="match status" value="2"/>
</dbReference>
<dbReference type="PIRSF" id="PIRSF006485">
    <property type="entry name" value="GTP-binding_EngA"/>
    <property type="match status" value="1"/>
</dbReference>
<dbReference type="PRINTS" id="PR00326">
    <property type="entry name" value="GTP1OBG"/>
</dbReference>
<dbReference type="SMART" id="SM00382">
    <property type="entry name" value="AAA"/>
    <property type="match status" value="2"/>
</dbReference>
<dbReference type="SUPFAM" id="SSF52540">
    <property type="entry name" value="P-loop containing nucleoside triphosphate hydrolases"/>
    <property type="match status" value="2"/>
</dbReference>
<dbReference type="PROSITE" id="PS51712">
    <property type="entry name" value="G_ENGA"/>
    <property type="match status" value="2"/>
</dbReference>
<name>DER_BURL3</name>
<reference key="1">
    <citation type="submission" date="2005-10" db="EMBL/GenBank/DDBJ databases">
        <title>Complete sequence of chromosome 1 of Burkholderia sp. 383.</title>
        <authorList>
            <consortium name="US DOE Joint Genome Institute"/>
            <person name="Copeland A."/>
            <person name="Lucas S."/>
            <person name="Lapidus A."/>
            <person name="Barry K."/>
            <person name="Detter J.C."/>
            <person name="Glavina T."/>
            <person name="Hammon N."/>
            <person name="Israni S."/>
            <person name="Pitluck S."/>
            <person name="Chain P."/>
            <person name="Malfatti S."/>
            <person name="Shin M."/>
            <person name="Vergez L."/>
            <person name="Schmutz J."/>
            <person name="Larimer F."/>
            <person name="Land M."/>
            <person name="Kyrpides N."/>
            <person name="Lykidis A."/>
            <person name="Richardson P."/>
        </authorList>
    </citation>
    <scope>NUCLEOTIDE SEQUENCE [LARGE SCALE GENOMIC DNA]</scope>
    <source>
        <strain>ATCC 17760 / DSM 23089 / LMG 22485 / NCIMB 9086 / R18194 / 383</strain>
    </source>
</reference>
<proteinExistence type="inferred from homology"/>
<organism>
    <name type="scientific">Burkholderia lata (strain ATCC 17760 / DSM 23089 / LMG 22485 / NCIMB 9086 / R18194 / 383)</name>
    <dbReference type="NCBI Taxonomy" id="482957"/>
    <lineage>
        <taxon>Bacteria</taxon>
        <taxon>Pseudomonadati</taxon>
        <taxon>Pseudomonadota</taxon>
        <taxon>Betaproteobacteria</taxon>
        <taxon>Burkholderiales</taxon>
        <taxon>Burkholderiaceae</taxon>
        <taxon>Burkholderia</taxon>
        <taxon>Burkholderia cepacia complex</taxon>
    </lineage>
</organism>
<evidence type="ECO:0000255" key="1">
    <source>
        <dbReference type="HAMAP-Rule" id="MF_00195"/>
    </source>
</evidence>
<feature type="chain" id="PRO_1000011586" description="GTPase Der">
    <location>
        <begin position="1"/>
        <end position="445"/>
    </location>
</feature>
<feature type="domain" description="EngA-type G 1">
    <location>
        <begin position="3"/>
        <end position="167"/>
    </location>
</feature>
<feature type="domain" description="EngA-type G 2">
    <location>
        <begin position="180"/>
        <end position="353"/>
    </location>
</feature>
<feature type="domain" description="KH-like" evidence="1">
    <location>
        <begin position="354"/>
        <end position="438"/>
    </location>
</feature>
<feature type="binding site" evidence="1">
    <location>
        <begin position="9"/>
        <end position="16"/>
    </location>
    <ligand>
        <name>GTP</name>
        <dbReference type="ChEBI" id="CHEBI:37565"/>
        <label>1</label>
    </ligand>
</feature>
<feature type="binding site" evidence="1">
    <location>
        <begin position="56"/>
        <end position="60"/>
    </location>
    <ligand>
        <name>GTP</name>
        <dbReference type="ChEBI" id="CHEBI:37565"/>
        <label>1</label>
    </ligand>
</feature>
<feature type="binding site" evidence="1">
    <location>
        <begin position="119"/>
        <end position="122"/>
    </location>
    <ligand>
        <name>GTP</name>
        <dbReference type="ChEBI" id="CHEBI:37565"/>
        <label>1</label>
    </ligand>
</feature>
<feature type="binding site" evidence="1">
    <location>
        <begin position="186"/>
        <end position="193"/>
    </location>
    <ligand>
        <name>GTP</name>
        <dbReference type="ChEBI" id="CHEBI:37565"/>
        <label>2</label>
    </ligand>
</feature>
<feature type="binding site" evidence="1">
    <location>
        <begin position="233"/>
        <end position="237"/>
    </location>
    <ligand>
        <name>GTP</name>
        <dbReference type="ChEBI" id="CHEBI:37565"/>
        <label>2</label>
    </ligand>
</feature>
<feature type="binding site" evidence="1">
    <location>
        <begin position="298"/>
        <end position="301"/>
    </location>
    <ligand>
        <name>GTP</name>
        <dbReference type="ChEBI" id="CHEBI:37565"/>
        <label>2</label>
    </ligand>
</feature>
<keyword id="KW-0342">GTP-binding</keyword>
<keyword id="KW-0547">Nucleotide-binding</keyword>
<keyword id="KW-0677">Repeat</keyword>
<keyword id="KW-0690">Ribosome biogenesis</keyword>
<accession>Q39FR3</accession>
<sequence>MKPVIALVGRPNVGKSTLFNRLTRSRDALVADLPGLTRDRHYGEGRVGERPYLVVDTGGFEPVAKDGILHEMARQTRQAVEEADVVVFIVDGRNGLAPQDKSIADYLRKTGRPIFLVVNKAEGMKYTAVATDFYELGLGDPRAISAAHGDGVTDMINEALEVAYAGQPEEADEDDPSRGIKIAIVGRPNVGKSTLVNALIGEDRVIAFDMPGTTRDSIYVDFERNGKKYTLIDTAGLRRRGKVFEAIEKFSVVKTLQSISDANVVILLLDAQQDISDQDAHIAGFVVEQGRALVIGVNKWDGLDEHARDRAKADLTRKLKFLDFAKSHYISAAKKTGIGALMRSVDDAYAAAMAKLPTPKLTRALIEAVEFQQPRRRGPVRPKLRYAHQGGQNPPLIVIHGNALDAVTETYKRYLENRFRETFSLTGTPLRIEFRSSNNPYADKS</sequence>